<proteinExistence type="evidence at protein level"/>
<keyword id="KW-0002">3D-structure</keyword>
<keyword id="KW-0378">Hydrolase</keyword>
<keyword id="KW-0479">Metal-binding</keyword>
<keyword id="KW-1185">Reference proteome</keyword>
<keyword id="KW-0862">Zinc</keyword>
<protein>
    <recommendedName>
        <fullName evidence="7">N(G),N(G)-dimethylarginine dimethylaminohydrolase</fullName>
        <shortName evidence="5">DDAH</shortName>
        <shortName evidence="5">Dimethylarginine dimethylaminohydrolase</shortName>
        <ecNumber evidence="1 2 3">3.5.3.18</ecNumber>
    </recommendedName>
    <alternativeName>
        <fullName evidence="6">Dimethylargininase</fullName>
    </alternativeName>
</protein>
<name>DDAH_PSEAE</name>
<reference key="1">
    <citation type="journal article" date="2000" name="Nature">
        <title>Complete genome sequence of Pseudomonas aeruginosa PAO1, an opportunistic pathogen.</title>
        <authorList>
            <person name="Stover C.K."/>
            <person name="Pham X.-Q.T."/>
            <person name="Erwin A.L."/>
            <person name="Mizoguchi S.D."/>
            <person name="Warrener P."/>
            <person name="Hickey M.J."/>
            <person name="Brinkman F.S.L."/>
            <person name="Hufnagle W.O."/>
            <person name="Kowalik D.J."/>
            <person name="Lagrou M."/>
            <person name="Garber R.L."/>
            <person name="Goltry L."/>
            <person name="Tolentino E."/>
            <person name="Westbrock-Wadman S."/>
            <person name="Yuan Y."/>
            <person name="Brody L.L."/>
            <person name="Coulter S.N."/>
            <person name="Folger K.R."/>
            <person name="Kas A."/>
            <person name="Larbig K."/>
            <person name="Lim R.M."/>
            <person name="Smith K.A."/>
            <person name="Spencer D.H."/>
            <person name="Wong G.K.-S."/>
            <person name="Wu Z."/>
            <person name="Paulsen I.T."/>
            <person name="Reizer J."/>
            <person name="Saier M.H. Jr."/>
            <person name="Hancock R.E.W."/>
            <person name="Lory S."/>
            <person name="Olson M.V."/>
        </authorList>
    </citation>
    <scope>NUCLEOTIDE SEQUENCE [LARGE SCALE GENOMIC DNA]</scope>
    <source>
        <strain>ATCC 15692 / DSM 22644 / CIP 104116 / JCM 14847 / LMG 12228 / 1C / PRS 101 / PAO1</strain>
    </source>
</reference>
<reference key="2">
    <citation type="journal article" date="1999" name="Mol. Microbiol.">
        <title>Identification of microbial dimethylarginine dimethylaminohydrolase enzymes.</title>
        <authorList>
            <person name="Santa Maria J."/>
            <person name="Vallance P."/>
            <person name="Charles I.G."/>
            <person name="Leiper J.M."/>
        </authorList>
    </citation>
    <scope>FUNCTION</scope>
    <scope>CATALYTIC ACTIVITY</scope>
</reference>
<reference key="3">
    <citation type="journal article" date="2006" name="Biochemistry">
        <title>Substrate-assisted cysteine deprotonation in the mechanism of dimethylargininase (DDAH) from Pseudomonas aeruginosa.</title>
        <authorList>
            <person name="Stone E.M."/>
            <person name="Costello A.L."/>
            <person name="Tierney D.L."/>
            <person name="Fast W."/>
        </authorList>
    </citation>
    <scope>FUNCTION</scope>
    <scope>CATALYTIC ACTIVITY</scope>
    <scope>ACTIVITY REGULATION</scope>
    <scope>ZINC BINDING SITES</scope>
    <scope>ACTIVE SITE</scope>
    <scope>IDENTIFICATION BY MASS SPECTROMETRY</scope>
    <scope>BIOPHYSICOCHEMICAL PROPERTIES</scope>
    <scope>MUTAGENESIS OF HIS-162 AND CYS-249</scope>
</reference>
<reference evidence="11" key="4">
    <citation type="journal article" date="2001" name="Nat. Struct. Biol.">
        <title>Structural insights into the hydrolysis of cellular nitric oxide synthase inhibitors by dimethylarginine dimethylaminohydrolase.</title>
        <authorList>
            <person name="Murray-Rust J."/>
            <person name="Leiper J."/>
            <person name="McAlister M."/>
            <person name="Phelan J."/>
            <person name="Tilley S."/>
            <person name="Santa Maria J."/>
            <person name="Vallance P."/>
            <person name="McDonald N."/>
        </authorList>
    </citation>
    <scope>X-RAY CRYSTALLOGRAPHY (1.8 ANGSTROMS) OF MUTANT SER-249 IN COMPLEX WITH CITRULLINE</scope>
    <scope>CATALYTIC ACTIVITY</scope>
    <scope>ACTIVE SITE</scope>
    <scope>SUBUNIT</scope>
    <scope>MUTAGENESIS OF GLU-114; HIS-162 AND CYS-249</scope>
</reference>
<reference evidence="12" key="5">
    <citation type="journal article" date="2008" name="Chem. Biol.">
        <title>Promiscuous partitioning of a covalent intermediate common in the pentein superfamily.</title>
        <authorList>
            <person name="Linsky T.W."/>
            <person name="Monzingo A.F."/>
            <person name="Stone E.M."/>
            <person name="Robertus J.D."/>
            <person name="Fast W."/>
        </authorList>
    </citation>
    <scope>X-RAY CRYSTALLOGRAPHY (2.81 ANGSTROMS) OF MUTANT GLY-162 IN COMPLEX WITH S-METHYL-L-THIOCITRULLIN</scope>
    <scope>ACTIVE SITE</scope>
    <scope>SUBUNIT</scope>
</reference>
<gene>
    <name type="ordered locus">PA1195</name>
</gene>
<organism>
    <name type="scientific">Pseudomonas aeruginosa (strain ATCC 15692 / DSM 22644 / CIP 104116 / JCM 14847 / LMG 12228 / 1C / PRS 101 / PAO1)</name>
    <dbReference type="NCBI Taxonomy" id="208964"/>
    <lineage>
        <taxon>Bacteria</taxon>
        <taxon>Pseudomonadati</taxon>
        <taxon>Pseudomonadota</taxon>
        <taxon>Gammaproteobacteria</taxon>
        <taxon>Pseudomonadales</taxon>
        <taxon>Pseudomonadaceae</taxon>
        <taxon>Pseudomonas</taxon>
    </lineage>
</organism>
<evidence type="ECO:0000269" key="1">
    <source>
    </source>
</evidence>
<evidence type="ECO:0000269" key="2">
    <source>
    </source>
</evidence>
<evidence type="ECO:0000269" key="3">
    <source>
    </source>
</evidence>
<evidence type="ECO:0000269" key="4">
    <source>
    </source>
</evidence>
<evidence type="ECO:0000303" key="5">
    <source>
    </source>
</evidence>
<evidence type="ECO:0000303" key="6">
    <source>
    </source>
</evidence>
<evidence type="ECO:0000305" key="7"/>
<evidence type="ECO:0000305" key="8">
    <source>
    </source>
</evidence>
<evidence type="ECO:0000305" key="9">
    <source>
    </source>
</evidence>
<evidence type="ECO:0000305" key="10">
    <source>
    </source>
</evidence>
<evidence type="ECO:0007744" key="11">
    <source>
        <dbReference type="PDB" id="1H70"/>
    </source>
</evidence>
<evidence type="ECO:0007744" key="12">
    <source>
        <dbReference type="PDB" id="3BPB"/>
    </source>
</evidence>
<evidence type="ECO:0007829" key="13">
    <source>
        <dbReference type="PDB" id="1H70"/>
    </source>
</evidence>
<evidence type="ECO:0007829" key="14">
    <source>
        <dbReference type="PDB" id="3BPB"/>
    </source>
</evidence>
<sequence>MFKHIIARTPARSLVDGLTSSHLGKPDYAKALEQHNAYIRALQTCDVDITLLPPDERFPDSVFVEDPVLCTSRCAIITRPGAESRRGETEIIEETVQRFYPGKVERIEAPGTVEAGDIMMVGDHFYIGESARTNAEGARQMIAILEKHGLSGSVVRLEKVLHLKTGLAYLEHNNLLAAGEFVSKPEFQDFNIIEIPEEESYAANCIWVNERVIMPAGYPRTREKIARLGYRVIEVDTSEYRKIDGGVSCMSLRF</sequence>
<feature type="chain" id="PRO_0000398677" description="N(G),N(G)-dimethylarginine dimethylaminohydrolase">
    <location>
        <begin position="1"/>
        <end position="254"/>
    </location>
</feature>
<feature type="active site" description="Proton donor" evidence="8 9 10">
    <location>
        <position position="162"/>
    </location>
</feature>
<feature type="active site" description="Nucleophile" evidence="8 9 10">
    <location>
        <position position="249"/>
    </location>
</feature>
<feature type="binding site" evidence="8">
    <location>
        <position position="18"/>
    </location>
    <ligand>
        <name>substrate</name>
    </ligand>
</feature>
<feature type="binding site" evidence="8">
    <location>
        <position position="60"/>
    </location>
    <ligand>
        <name>substrate</name>
    </ligand>
</feature>
<feature type="binding site" evidence="8">
    <location>
        <begin position="65"/>
        <end position="66"/>
    </location>
    <ligand>
        <name>substrate</name>
    </ligand>
</feature>
<feature type="binding site" evidence="8">
    <location>
        <position position="85"/>
    </location>
    <ligand>
        <name>substrate</name>
    </ligand>
</feature>
<feature type="binding site" evidence="8">
    <location>
        <position position="132"/>
    </location>
    <ligand>
        <name>substrate</name>
    </ligand>
</feature>
<feature type="binding site" evidence="9">
    <location>
        <position position="162"/>
    </location>
    <ligand>
        <name>Zn(2+)</name>
        <dbReference type="ChEBI" id="CHEBI:29105"/>
    </ligand>
</feature>
<feature type="binding site" evidence="8">
    <location>
        <position position="243"/>
    </location>
    <ligand>
        <name>substrate</name>
    </ligand>
</feature>
<feature type="binding site" evidence="9">
    <location>
        <position position="249"/>
    </location>
    <ligand>
        <name>Zn(2+)</name>
        <dbReference type="ChEBI" id="CHEBI:29105"/>
    </ligand>
</feature>
<feature type="mutagenesis site" description="Abolishes enzyme activity." evidence="2">
    <original>E</original>
    <variation>Q</variation>
    <location>
        <position position="114"/>
    </location>
</feature>
<feature type="mutagenesis site" description="Abolishes enzyme activity." evidence="2 3">
    <original>H</original>
    <variation>G</variation>
    <variation>F</variation>
    <location>
        <position position="162"/>
    </location>
</feature>
<feature type="mutagenesis site" description="Abolishes enzyme activity." evidence="2 3">
    <original>C</original>
    <variation>S</variation>
    <location>
        <position position="249"/>
    </location>
</feature>
<feature type="strand" evidence="13">
    <location>
        <begin position="4"/>
        <end position="8"/>
    </location>
</feature>
<feature type="helix" evidence="13">
    <location>
        <begin position="12"/>
        <end position="16"/>
    </location>
</feature>
<feature type="strand" evidence="14">
    <location>
        <begin position="21"/>
        <end position="23"/>
    </location>
</feature>
<feature type="helix" evidence="13">
    <location>
        <begin position="28"/>
        <end position="42"/>
    </location>
</feature>
<feature type="turn" evidence="14">
    <location>
        <begin position="43"/>
        <end position="46"/>
    </location>
</feature>
<feature type="strand" evidence="13">
    <location>
        <begin position="48"/>
        <end position="52"/>
    </location>
</feature>
<feature type="turn" evidence="13">
    <location>
        <begin position="59"/>
        <end position="62"/>
    </location>
</feature>
<feature type="turn" evidence="13">
    <location>
        <begin position="64"/>
        <end position="67"/>
    </location>
</feature>
<feature type="strand" evidence="13">
    <location>
        <begin position="68"/>
        <end position="70"/>
    </location>
</feature>
<feature type="strand" evidence="13">
    <location>
        <begin position="75"/>
        <end position="77"/>
    </location>
</feature>
<feature type="helix" evidence="13">
    <location>
        <begin position="83"/>
        <end position="87"/>
    </location>
</feature>
<feature type="helix" evidence="13">
    <location>
        <begin position="88"/>
        <end position="99"/>
    </location>
</feature>
<feature type="strand" evidence="13">
    <location>
        <begin position="104"/>
        <end position="106"/>
    </location>
</feature>
<feature type="helix" evidence="13">
    <location>
        <begin position="115"/>
        <end position="117"/>
    </location>
</feature>
<feature type="strand" evidence="13">
    <location>
        <begin position="118"/>
        <end position="121"/>
    </location>
</feature>
<feature type="strand" evidence="13">
    <location>
        <begin position="124"/>
        <end position="129"/>
    </location>
</feature>
<feature type="strand" evidence="13">
    <location>
        <begin position="131"/>
        <end position="133"/>
    </location>
</feature>
<feature type="helix" evidence="13">
    <location>
        <begin position="135"/>
        <end position="147"/>
    </location>
</feature>
<feature type="strand" evidence="13">
    <location>
        <begin position="151"/>
        <end position="156"/>
    </location>
</feature>
<feature type="strand" evidence="13">
    <location>
        <begin position="158"/>
        <end position="162"/>
    </location>
</feature>
<feature type="helix" evidence="13">
    <location>
        <begin position="163"/>
        <end position="165"/>
    </location>
</feature>
<feature type="strand" evidence="13">
    <location>
        <begin position="166"/>
        <end position="169"/>
    </location>
</feature>
<feature type="strand" evidence="13">
    <location>
        <begin position="174"/>
        <end position="177"/>
    </location>
</feature>
<feature type="helix" evidence="13">
    <location>
        <begin position="179"/>
        <end position="181"/>
    </location>
</feature>
<feature type="helix" evidence="13">
    <location>
        <begin position="185"/>
        <end position="187"/>
    </location>
</feature>
<feature type="strand" evidence="13">
    <location>
        <begin position="190"/>
        <end position="194"/>
    </location>
</feature>
<feature type="helix" evidence="13">
    <location>
        <begin position="197"/>
        <end position="203"/>
    </location>
</feature>
<feature type="strand" evidence="13">
    <location>
        <begin position="206"/>
        <end position="208"/>
    </location>
</feature>
<feature type="strand" evidence="13">
    <location>
        <begin position="211"/>
        <end position="217"/>
    </location>
</feature>
<feature type="helix" evidence="13">
    <location>
        <begin position="219"/>
        <end position="226"/>
    </location>
</feature>
<feature type="turn" evidence="13">
    <location>
        <begin position="227"/>
        <end position="229"/>
    </location>
</feature>
<feature type="strand" evidence="13">
    <location>
        <begin position="231"/>
        <end position="235"/>
    </location>
</feature>
<feature type="helix" evidence="13">
    <location>
        <begin position="238"/>
        <end position="241"/>
    </location>
</feature>
<feature type="turn" evidence="13">
    <location>
        <begin position="242"/>
        <end position="244"/>
    </location>
</feature>
<feature type="turn" evidence="13">
    <location>
        <begin position="247"/>
        <end position="250"/>
    </location>
</feature>
<feature type="strand" evidence="13">
    <location>
        <begin position="252"/>
        <end position="254"/>
    </location>
</feature>
<accession>Q9I4E3</accession>
<dbReference type="EC" id="3.5.3.18" evidence="1 2 3"/>
<dbReference type="EMBL" id="AE004091">
    <property type="protein sequence ID" value="AAG04584.1"/>
    <property type="molecule type" value="Genomic_DNA"/>
</dbReference>
<dbReference type="PIR" id="F83497">
    <property type="entry name" value="F83497"/>
</dbReference>
<dbReference type="RefSeq" id="NP_249886.1">
    <property type="nucleotide sequence ID" value="NC_002516.2"/>
</dbReference>
<dbReference type="PDB" id="1H70">
    <property type="method" value="X-ray"/>
    <property type="resolution" value="1.80 A"/>
    <property type="chains" value="A=1-254"/>
</dbReference>
<dbReference type="PDB" id="3BPB">
    <property type="method" value="X-ray"/>
    <property type="resolution" value="2.81 A"/>
    <property type="chains" value="A/B=1-254"/>
</dbReference>
<dbReference type="PDB" id="3RHY">
    <property type="method" value="X-ray"/>
    <property type="resolution" value="2.18 A"/>
    <property type="chains" value="A/B=1-254"/>
</dbReference>
<dbReference type="PDBsum" id="1H70"/>
<dbReference type="PDBsum" id="3BPB"/>
<dbReference type="PDBsum" id="3RHY"/>
<dbReference type="BMRB" id="Q9I4E3"/>
<dbReference type="SMR" id="Q9I4E3"/>
<dbReference type="STRING" id="208964.PA1195"/>
<dbReference type="PaxDb" id="208964-PA1195"/>
<dbReference type="GeneID" id="883112"/>
<dbReference type="KEGG" id="pae:PA1195"/>
<dbReference type="PATRIC" id="fig|208964.12.peg.1241"/>
<dbReference type="PseudoCAP" id="PA1195"/>
<dbReference type="HOGENOM" id="CLU_067923_1_0_6"/>
<dbReference type="InParanoid" id="Q9I4E3"/>
<dbReference type="OrthoDB" id="9790596at2"/>
<dbReference type="PhylomeDB" id="Q9I4E3"/>
<dbReference type="BioCyc" id="PAER208964:G1FZ6-1220-MONOMER"/>
<dbReference type="BRENDA" id="3.5.3.18">
    <property type="organism ID" value="5087"/>
</dbReference>
<dbReference type="EvolutionaryTrace" id="Q9I4E3"/>
<dbReference type="Proteomes" id="UP000002438">
    <property type="component" value="Chromosome"/>
</dbReference>
<dbReference type="GO" id="GO:0016597">
    <property type="term" value="F:amino acid binding"/>
    <property type="evidence" value="ECO:0000318"/>
    <property type="project" value="GO_Central"/>
</dbReference>
<dbReference type="GO" id="GO:0016403">
    <property type="term" value="F:dimethylargininase activity"/>
    <property type="evidence" value="ECO:0000318"/>
    <property type="project" value="GO_Central"/>
</dbReference>
<dbReference type="GO" id="GO:0046872">
    <property type="term" value="F:metal ion binding"/>
    <property type="evidence" value="ECO:0007669"/>
    <property type="project" value="UniProtKB-KW"/>
</dbReference>
<dbReference type="GO" id="GO:0006525">
    <property type="term" value="P:arginine metabolic process"/>
    <property type="evidence" value="ECO:0000318"/>
    <property type="project" value="GO_Central"/>
</dbReference>
<dbReference type="GO" id="GO:0000052">
    <property type="term" value="P:citrulline metabolic process"/>
    <property type="evidence" value="ECO:0000318"/>
    <property type="project" value="GO_Central"/>
</dbReference>
<dbReference type="GO" id="GO:0045429">
    <property type="term" value="P:positive regulation of nitric oxide biosynthetic process"/>
    <property type="evidence" value="ECO:0000318"/>
    <property type="project" value="GO_Central"/>
</dbReference>
<dbReference type="Gene3D" id="3.75.10.10">
    <property type="entry name" value="L-arginine/glycine Amidinotransferase, Chain A"/>
    <property type="match status" value="1"/>
</dbReference>
<dbReference type="InterPro" id="IPR054924">
    <property type="entry name" value="DDAH"/>
</dbReference>
<dbReference type="InterPro" id="IPR033199">
    <property type="entry name" value="DDAH-like"/>
</dbReference>
<dbReference type="NCBIfam" id="NF045658">
    <property type="entry name" value="DiMArgaseDdah"/>
    <property type="match status" value="1"/>
</dbReference>
<dbReference type="PANTHER" id="PTHR12737:SF9">
    <property type="entry name" value="DIMETHYLARGININASE"/>
    <property type="match status" value="1"/>
</dbReference>
<dbReference type="PANTHER" id="PTHR12737">
    <property type="entry name" value="DIMETHYLARGININE DIMETHYLAMINOHYDROLASE"/>
    <property type="match status" value="1"/>
</dbReference>
<dbReference type="Pfam" id="PF19420">
    <property type="entry name" value="DDAH_eukar"/>
    <property type="match status" value="1"/>
</dbReference>
<dbReference type="SUPFAM" id="SSF55909">
    <property type="entry name" value="Pentein"/>
    <property type="match status" value="1"/>
</dbReference>
<comment type="function">
    <text evidence="1 3">Hydrolyzes N(G),N(G)-dimethyl-L-arginine (ADMA) and N(G)-monomethyl-L-arginine (MMA).</text>
</comment>
<comment type="catalytic activity">
    <reaction evidence="1 2 3">
        <text>N(omega),N(omega)-dimethyl-L-arginine + H2O = dimethylamine + L-citrulline</text>
        <dbReference type="Rhea" id="RHEA:17305"/>
        <dbReference type="ChEBI" id="CHEBI:15377"/>
        <dbReference type="ChEBI" id="CHEBI:57743"/>
        <dbReference type="ChEBI" id="CHEBI:58040"/>
        <dbReference type="ChEBI" id="CHEBI:58326"/>
        <dbReference type="EC" id="3.5.3.18"/>
    </reaction>
</comment>
<comment type="catalytic activity">
    <reaction evidence="1 3">
        <text>N(omega)-methyl-L-arginine + H2O = L-citrulline + methylamine</text>
        <dbReference type="Rhea" id="RHEA:25173"/>
        <dbReference type="ChEBI" id="CHEBI:15377"/>
        <dbReference type="ChEBI" id="CHEBI:57743"/>
        <dbReference type="ChEBI" id="CHEBI:59338"/>
        <dbReference type="ChEBI" id="CHEBI:114953"/>
        <dbReference type="EC" id="3.5.3.18"/>
    </reaction>
</comment>
<comment type="activity regulation">
    <text evidence="3">Inhibited by zinc ions. Competitively inhibited by lysine.</text>
</comment>
<comment type="biophysicochemical properties">
    <kinetics>
        <KM evidence="3">44 uM for N-methyl-L-arginine</KM>
        <KM evidence="3">39 uM for N,N-dimethyl-L-arginine</KM>
        <KM evidence="3">26 uM for S-methyl-L-thiocitrulline</KM>
    </kinetics>
    <phDependence>
        <text evidence="3">Optimum pH is 7-8.5.</text>
    </phDependence>
</comment>
<comment type="subunit">
    <text evidence="2 4">Homodimer.</text>
</comment>
<comment type="similarity">
    <text evidence="7">Belongs to the DDAH family.</text>
</comment>